<name>UBIG_ECOL6</name>
<organism>
    <name type="scientific">Escherichia coli O6:H1 (strain CFT073 / ATCC 700928 / UPEC)</name>
    <dbReference type="NCBI Taxonomy" id="199310"/>
    <lineage>
        <taxon>Bacteria</taxon>
        <taxon>Pseudomonadati</taxon>
        <taxon>Pseudomonadota</taxon>
        <taxon>Gammaproteobacteria</taxon>
        <taxon>Enterobacterales</taxon>
        <taxon>Enterobacteriaceae</taxon>
        <taxon>Escherichia</taxon>
    </lineage>
</organism>
<protein>
    <recommendedName>
        <fullName evidence="1">Ubiquinone biosynthesis O-methyltransferase</fullName>
    </recommendedName>
    <alternativeName>
        <fullName evidence="1">2-octaprenyl-6-hydroxyphenol methylase</fullName>
        <ecNumber evidence="1">2.1.1.222</ecNumber>
    </alternativeName>
    <alternativeName>
        <fullName evidence="1">3-demethylubiquinone-8 3-O-methyltransferase</fullName>
        <ecNumber evidence="1">2.1.1.64</ecNumber>
    </alternativeName>
</protein>
<accession>Q8FFP0</accession>
<feature type="chain" id="PRO_0000193380" description="Ubiquinone biosynthesis O-methyltransferase">
    <location>
        <begin position="1"/>
        <end position="240"/>
    </location>
</feature>
<feature type="binding site" evidence="1">
    <location>
        <position position="44"/>
    </location>
    <ligand>
        <name>S-adenosyl-L-methionine</name>
        <dbReference type="ChEBI" id="CHEBI:59789"/>
    </ligand>
</feature>
<feature type="binding site" evidence="1">
    <location>
        <position position="64"/>
    </location>
    <ligand>
        <name>S-adenosyl-L-methionine</name>
        <dbReference type="ChEBI" id="CHEBI:59789"/>
    </ligand>
</feature>
<feature type="binding site" evidence="1">
    <location>
        <position position="85"/>
    </location>
    <ligand>
        <name>S-adenosyl-L-methionine</name>
        <dbReference type="ChEBI" id="CHEBI:59789"/>
    </ligand>
</feature>
<feature type="binding site" evidence="1">
    <location>
        <position position="129"/>
    </location>
    <ligand>
        <name>S-adenosyl-L-methionine</name>
        <dbReference type="ChEBI" id="CHEBI:59789"/>
    </ligand>
</feature>
<evidence type="ECO:0000255" key="1">
    <source>
        <dbReference type="HAMAP-Rule" id="MF_00472"/>
    </source>
</evidence>
<gene>
    <name evidence="1" type="primary">ubiG</name>
    <name type="ordered locus">c2774</name>
</gene>
<proteinExistence type="inferred from homology"/>
<keyword id="KW-0489">Methyltransferase</keyword>
<keyword id="KW-1185">Reference proteome</keyword>
<keyword id="KW-0949">S-adenosyl-L-methionine</keyword>
<keyword id="KW-0808">Transferase</keyword>
<keyword id="KW-0831">Ubiquinone biosynthesis</keyword>
<dbReference type="EC" id="2.1.1.222" evidence="1"/>
<dbReference type="EC" id="2.1.1.64" evidence="1"/>
<dbReference type="EMBL" id="AE014075">
    <property type="protein sequence ID" value="AAN81228.1"/>
    <property type="molecule type" value="Genomic_DNA"/>
</dbReference>
<dbReference type="RefSeq" id="WP_000990760.1">
    <property type="nucleotide sequence ID" value="NZ_CP051263.1"/>
</dbReference>
<dbReference type="SMR" id="Q8FFP0"/>
<dbReference type="STRING" id="199310.c2774"/>
<dbReference type="KEGG" id="ecc:c2774"/>
<dbReference type="eggNOG" id="COG2227">
    <property type="taxonomic scope" value="Bacteria"/>
</dbReference>
<dbReference type="HOGENOM" id="CLU_042432_5_0_6"/>
<dbReference type="BioCyc" id="ECOL199310:C2774-MONOMER"/>
<dbReference type="UniPathway" id="UPA00232"/>
<dbReference type="Proteomes" id="UP000001410">
    <property type="component" value="Chromosome"/>
</dbReference>
<dbReference type="GO" id="GO:0102208">
    <property type="term" value="F:2-polyprenyl-6-hydroxyphenol methylase activity"/>
    <property type="evidence" value="ECO:0007669"/>
    <property type="project" value="UniProtKB-EC"/>
</dbReference>
<dbReference type="GO" id="GO:0061542">
    <property type="term" value="F:3-demethylubiquinol 3-O-methyltransferase activity"/>
    <property type="evidence" value="ECO:0007669"/>
    <property type="project" value="UniProtKB-UniRule"/>
</dbReference>
<dbReference type="GO" id="GO:0010420">
    <property type="term" value="F:polyprenyldihydroxybenzoate methyltransferase activity"/>
    <property type="evidence" value="ECO:0007669"/>
    <property type="project" value="InterPro"/>
</dbReference>
<dbReference type="GO" id="GO:0032259">
    <property type="term" value="P:methylation"/>
    <property type="evidence" value="ECO:0007669"/>
    <property type="project" value="UniProtKB-KW"/>
</dbReference>
<dbReference type="CDD" id="cd02440">
    <property type="entry name" value="AdoMet_MTases"/>
    <property type="match status" value="1"/>
</dbReference>
<dbReference type="FunFam" id="3.40.50.150:FF:000028">
    <property type="entry name" value="Ubiquinone biosynthesis O-methyltransferase"/>
    <property type="match status" value="1"/>
</dbReference>
<dbReference type="Gene3D" id="3.40.50.150">
    <property type="entry name" value="Vaccinia Virus protein VP39"/>
    <property type="match status" value="1"/>
</dbReference>
<dbReference type="HAMAP" id="MF_00472">
    <property type="entry name" value="UbiG"/>
    <property type="match status" value="1"/>
</dbReference>
<dbReference type="InterPro" id="IPR029063">
    <property type="entry name" value="SAM-dependent_MTases_sf"/>
</dbReference>
<dbReference type="InterPro" id="IPR010233">
    <property type="entry name" value="UbiG_MeTrfase"/>
</dbReference>
<dbReference type="NCBIfam" id="TIGR01983">
    <property type="entry name" value="UbiG"/>
    <property type="match status" value="1"/>
</dbReference>
<dbReference type="PANTHER" id="PTHR43464">
    <property type="entry name" value="METHYLTRANSFERASE"/>
    <property type="match status" value="1"/>
</dbReference>
<dbReference type="PANTHER" id="PTHR43464:SF19">
    <property type="entry name" value="UBIQUINONE BIOSYNTHESIS O-METHYLTRANSFERASE, MITOCHONDRIAL"/>
    <property type="match status" value="1"/>
</dbReference>
<dbReference type="Pfam" id="PF13489">
    <property type="entry name" value="Methyltransf_23"/>
    <property type="match status" value="1"/>
</dbReference>
<dbReference type="SUPFAM" id="SSF53335">
    <property type="entry name" value="S-adenosyl-L-methionine-dependent methyltransferases"/>
    <property type="match status" value="1"/>
</dbReference>
<reference key="1">
    <citation type="journal article" date="2002" name="Proc. Natl. Acad. Sci. U.S.A.">
        <title>Extensive mosaic structure revealed by the complete genome sequence of uropathogenic Escherichia coli.</title>
        <authorList>
            <person name="Welch R.A."/>
            <person name="Burland V."/>
            <person name="Plunkett G. III"/>
            <person name="Redford P."/>
            <person name="Roesch P."/>
            <person name="Rasko D."/>
            <person name="Buckles E.L."/>
            <person name="Liou S.-R."/>
            <person name="Boutin A."/>
            <person name="Hackett J."/>
            <person name="Stroud D."/>
            <person name="Mayhew G.F."/>
            <person name="Rose D.J."/>
            <person name="Zhou S."/>
            <person name="Schwartz D.C."/>
            <person name="Perna N.T."/>
            <person name="Mobley H.L.T."/>
            <person name="Donnenberg M.S."/>
            <person name="Blattner F.R."/>
        </authorList>
    </citation>
    <scope>NUCLEOTIDE SEQUENCE [LARGE SCALE GENOMIC DNA]</scope>
    <source>
        <strain>CFT073 / ATCC 700928 / UPEC</strain>
    </source>
</reference>
<comment type="function">
    <text evidence="1">O-methyltransferase that catalyzes the 2 O-methylation steps in the ubiquinone biosynthetic pathway.</text>
</comment>
<comment type="catalytic activity">
    <reaction evidence="1">
        <text>a 3-demethylubiquinol + S-adenosyl-L-methionine = a ubiquinol + S-adenosyl-L-homocysteine + H(+)</text>
        <dbReference type="Rhea" id="RHEA:44380"/>
        <dbReference type="Rhea" id="RHEA-COMP:9566"/>
        <dbReference type="Rhea" id="RHEA-COMP:10914"/>
        <dbReference type="ChEBI" id="CHEBI:15378"/>
        <dbReference type="ChEBI" id="CHEBI:17976"/>
        <dbReference type="ChEBI" id="CHEBI:57856"/>
        <dbReference type="ChEBI" id="CHEBI:59789"/>
        <dbReference type="ChEBI" id="CHEBI:84422"/>
        <dbReference type="EC" id="2.1.1.64"/>
    </reaction>
</comment>
<comment type="catalytic activity">
    <reaction evidence="1">
        <text>a 3-(all-trans-polyprenyl)benzene-1,2-diol + S-adenosyl-L-methionine = a 2-methoxy-6-(all-trans-polyprenyl)phenol + S-adenosyl-L-homocysteine + H(+)</text>
        <dbReference type="Rhea" id="RHEA:31411"/>
        <dbReference type="Rhea" id="RHEA-COMP:9550"/>
        <dbReference type="Rhea" id="RHEA-COMP:9551"/>
        <dbReference type="ChEBI" id="CHEBI:15378"/>
        <dbReference type="ChEBI" id="CHEBI:57856"/>
        <dbReference type="ChEBI" id="CHEBI:59789"/>
        <dbReference type="ChEBI" id="CHEBI:62729"/>
        <dbReference type="ChEBI" id="CHEBI:62731"/>
        <dbReference type="EC" id="2.1.1.222"/>
    </reaction>
</comment>
<comment type="pathway">
    <text evidence="1">Cofactor biosynthesis; ubiquinone biosynthesis.</text>
</comment>
<comment type="similarity">
    <text evidence="1">Belongs to the methyltransferase superfamily. UbiG/COQ3 family.</text>
</comment>
<sequence length="240" mass="26538">MNAEKSPVNHNVDHEEIAKFEAVASHWWDLEGEFKPLHRINPLRLGYIAERAGGLFGKKVLDVGCGGGILAESMAREGATVTGLDMGFEPLQVAKLHALESGIQVDYVQETVEEHAAKHAGQYDVVTCMEMLEHVPDPQSVVRACAQLVKPGGDVFFSTLNRNGKSWLMAVVGAEYILRMVPKGTHDVKKFIKPAELLGWVVQTSLKERHMTGLHYNPITNTFKLGPGVDVNYMLHTQNK</sequence>